<comment type="function">
    <text evidence="1">During virus replication, may deplete host UNG protein, and incude G2-M cell cycle arrest. Acts by targeting specific host proteins for degradation by the 26S proteasome, through association with the cellular CUL4A-DDB1 E3 ligase complex by direct interaction with host VPRPB/DCAF-1. Cell cycle arrest reportedly occurs within hours of infection and is not blocked by antiviral agents, suggesting that it is initiated by the VPR carried into the virion. Additionally, VPR induces apoptosis in a cell cycle dependent manner suggesting that these two effects are mechanistically linked. Detected in the serum and cerebrospinal fluid of AIDS patient, VPR may also induce cell death to bystander cells.</text>
</comment>
<comment type="function">
    <text evidence="1">During virus entry, plays a role in the transport of the viral pre-integration (PIC) complex to the host nucleus. This function is crucial for viral infection of non-dividing macrophages. May act directly at the nuclear pore complex, by binding nucleoporins phenylalanine-glycine (FG)-repeat regions.</text>
</comment>
<comment type="subunit">
    <text evidence="1">Homooligomer, may form homodimer. Interacts with p6-gag region of the Pr55 Gag precursor protein through a (Leu-X-X)4 motif near the C-terminus of the P6gag protein. Interacts with host UNG. May interact with host RAD23A/HHR23A. Interacts with host VPRBP/DCAF1, leading to hijack the CUL4A-RBX1-DDB1-DCAF1/VPRBP complex, mediating ubiquitination of host proteins such as TERT and ZGPAT and arrest of the cell cycle in G2 phase.</text>
</comment>
<comment type="subcellular location">
    <subcellularLocation>
        <location evidence="1">Virion</location>
    </subcellularLocation>
    <subcellularLocation>
        <location evidence="1">Host nucleus</location>
    </subcellularLocation>
    <subcellularLocation>
        <location evidence="1">Host extracellular space</location>
    </subcellularLocation>
    <text evidence="1">Incorporation into virion is dependent on p6 GAG sequences. Lacks a canonical nuclear localization signal, thus import into nucleus may function independently of the human importin pathway. Detected in high quantity in the serum and cerebrospinal fluid of AIDS patient.</text>
</comment>
<comment type="PTM">
    <text evidence="1">Phosphorylated on several residues by host. These phosphorylations regulate VPR activity for the nuclear import of the HIV-1 pre-integration complex.</text>
</comment>
<comment type="miscellaneous">
    <text evidence="1">HIV-1 lineages are divided in three main groups, M (for Major), O (for Outlier), and N (for New, or Non-M, Non-O). The vast majority of strains found worldwide belong to the group M. Group O seems to be endemic to and largely confined to Cameroon and neighboring countries in West Central Africa, where these viruses represent a small minority of HIV-1 strains. The group N is represented by a limited number of isolates from Cameroonian persons. The group M is further subdivided in 9 clades or subtypes (A to D, F to H, J and K).</text>
</comment>
<comment type="similarity">
    <text evidence="1">Belongs to the HIV-1 VPR protein family.</text>
</comment>
<feature type="chain" id="PRO_0000248297" description="Protein Vpr">
    <location>
        <begin position="1"/>
        <end position="95"/>
    </location>
</feature>
<feature type="region of interest" description="Homooligomerization" evidence="1">
    <location>
        <begin position="1"/>
        <end position="42"/>
    </location>
</feature>
<feature type="modified residue" description="Phosphoserine; by host" evidence="1">
    <location>
        <position position="79"/>
    </location>
</feature>
<feature type="modified residue" description="Phosphoserine; by host" evidence="1">
    <location>
        <position position="93"/>
    </location>
</feature>
<feature type="modified residue" description="Phosphoserine; by host" evidence="1">
    <location>
        <position position="95"/>
    </location>
</feature>
<organismHost>
    <name type="scientific">Pan troglodytes</name>
    <name type="common">Chimpanzee</name>
    <dbReference type="NCBI Taxonomy" id="9598"/>
</organismHost>
<accession>Q1A247</accession>
<proteinExistence type="inferred from homology"/>
<gene>
    <name evidence="1" type="primary">vpr</name>
</gene>
<name>VPR_SIVEK</name>
<evidence type="ECO:0000255" key="1">
    <source>
        <dbReference type="HAMAP-Rule" id="MF_04080"/>
    </source>
</evidence>
<reference key="1">
    <citation type="journal article" date="2006" name="Science">
        <title>Chimpanzee reservoirs of pandemic and nonpandemic HIV-1.</title>
        <authorList>
            <person name="Keele B.F."/>
            <person name="Van Heuverswyn F."/>
            <person name="Li Y."/>
            <person name="Bailes E."/>
            <person name="Takehisa J."/>
            <person name="Santiago M.L."/>
            <person name="Bibollet-Ruche F."/>
            <person name="Chen Y."/>
            <person name="Wain L.V."/>
            <person name="Liegeois F."/>
            <person name="Loul S."/>
            <person name="Ngole E.M."/>
            <person name="Bienvenue Y."/>
            <person name="Delaporte E."/>
            <person name="Brookfield J.F."/>
            <person name="Sharp P.M."/>
            <person name="Shaw G.M."/>
            <person name="Peeters M."/>
            <person name="Hahn B.H."/>
        </authorList>
    </citation>
    <scope>NUCLEOTIDE SEQUENCE [GENOMIC RNA]</scope>
</reference>
<keyword id="KW-0010">Activator</keyword>
<keyword id="KW-0014">AIDS</keyword>
<keyword id="KW-0053">Apoptosis</keyword>
<keyword id="KW-0131">Cell cycle</keyword>
<keyword id="KW-1079">Host G2/M cell cycle arrest by virus</keyword>
<keyword id="KW-1048">Host nucleus</keyword>
<keyword id="KW-0945">Host-virus interaction</keyword>
<keyword id="KW-0407">Ion channel</keyword>
<keyword id="KW-0406">Ion transport</keyword>
<keyword id="KW-1121">Modulation of host cell cycle by virus</keyword>
<keyword id="KW-0597">Phosphoprotein</keyword>
<keyword id="KW-1185">Reference proteome</keyword>
<keyword id="KW-0804">Transcription</keyword>
<keyword id="KW-0805">Transcription regulation</keyword>
<keyword id="KW-0813">Transport</keyword>
<keyword id="KW-1163">Viral penetration into host nucleus</keyword>
<keyword id="KW-0946">Virion</keyword>
<keyword id="KW-1160">Virus entry into host cell</keyword>
<protein>
    <recommendedName>
        <fullName evidence="1">Protein Vpr</fullName>
    </recommendedName>
    <alternativeName>
        <fullName evidence="1">R ORF protein</fullName>
    </alternativeName>
    <alternativeName>
        <fullName evidence="1">Viral protein R</fullName>
    </alternativeName>
</protein>
<sequence>MEQAPEDQGPQREPYNEWALELLEDLKNEALRHFPRPWLHGLGQYFYNTYGDTWEGVEAIIRTLQQLLFIHYRIGCQHSRIGITPQRRRNGASRS</sequence>
<organism>
    <name type="scientific">Simian immunodeficiency virus (isolate EK505)</name>
    <name type="common">SIV-cpz</name>
    <name type="synonym">Chimpanzee immunodeficiency virus</name>
    <dbReference type="NCBI Taxonomy" id="388912"/>
    <lineage>
        <taxon>Viruses</taxon>
        <taxon>Riboviria</taxon>
        <taxon>Pararnavirae</taxon>
        <taxon>Artverviricota</taxon>
        <taxon>Revtraviricetes</taxon>
        <taxon>Ortervirales</taxon>
        <taxon>Retroviridae</taxon>
        <taxon>Orthoretrovirinae</taxon>
        <taxon>Lentivirus</taxon>
        <taxon>Simian immunodeficiency virus</taxon>
    </lineage>
</organism>
<dbReference type="EMBL" id="DQ373065">
    <property type="protein sequence ID" value="ABD19495.1"/>
    <property type="molecule type" value="Genomic_RNA"/>
</dbReference>
<dbReference type="SMR" id="Q1A247"/>
<dbReference type="Proteomes" id="UP000008436">
    <property type="component" value="Segment"/>
</dbReference>
<dbReference type="GO" id="GO:0043657">
    <property type="term" value="C:host cell"/>
    <property type="evidence" value="ECO:0007669"/>
    <property type="project" value="GOC"/>
</dbReference>
<dbReference type="GO" id="GO:0042025">
    <property type="term" value="C:host cell nucleus"/>
    <property type="evidence" value="ECO:0007669"/>
    <property type="project" value="UniProtKB-SubCell"/>
</dbReference>
<dbReference type="GO" id="GO:0043655">
    <property type="term" value="C:host extracellular space"/>
    <property type="evidence" value="ECO:0007669"/>
    <property type="project" value="UniProtKB-SubCell"/>
</dbReference>
<dbReference type="GO" id="GO:0044423">
    <property type="term" value="C:virion component"/>
    <property type="evidence" value="ECO:0007669"/>
    <property type="project" value="UniProtKB-UniRule"/>
</dbReference>
<dbReference type="GO" id="GO:0006351">
    <property type="term" value="P:DNA-templated transcription"/>
    <property type="evidence" value="ECO:0007669"/>
    <property type="project" value="UniProtKB-UniRule"/>
</dbReference>
<dbReference type="GO" id="GO:0034220">
    <property type="term" value="P:monoatomic ion transmembrane transport"/>
    <property type="evidence" value="ECO:0007669"/>
    <property type="project" value="UniProtKB-KW"/>
</dbReference>
<dbReference type="GO" id="GO:0051260">
    <property type="term" value="P:protein homooligomerization"/>
    <property type="evidence" value="ECO:0007669"/>
    <property type="project" value="UniProtKB-UniRule"/>
</dbReference>
<dbReference type="GO" id="GO:0006355">
    <property type="term" value="P:regulation of DNA-templated transcription"/>
    <property type="evidence" value="ECO:0007669"/>
    <property type="project" value="UniProtKB-UniRule"/>
</dbReference>
<dbReference type="GO" id="GO:0046718">
    <property type="term" value="P:symbiont entry into host cell"/>
    <property type="evidence" value="ECO:0007669"/>
    <property type="project" value="UniProtKB-KW"/>
</dbReference>
<dbReference type="GO" id="GO:0052151">
    <property type="term" value="P:symbiont-mediated activation of host apoptosis"/>
    <property type="evidence" value="ECO:0007669"/>
    <property type="project" value="UniProtKB-UniRule"/>
</dbReference>
<dbReference type="GO" id="GO:0039592">
    <property type="term" value="P:symbiont-mediated arrest of host cell cycle during G2/M transition"/>
    <property type="evidence" value="ECO:0007669"/>
    <property type="project" value="UniProtKB-UniRule"/>
</dbReference>
<dbReference type="GO" id="GO:0075732">
    <property type="term" value="P:viral penetration into host nucleus"/>
    <property type="evidence" value="ECO:0007669"/>
    <property type="project" value="UniProtKB-UniRule"/>
</dbReference>
<dbReference type="Gene3D" id="6.10.210.10">
    <property type="match status" value="1"/>
</dbReference>
<dbReference type="Gene3D" id="1.20.5.90">
    <property type="entry name" value="VpR/VpX protein, C-terminal domain"/>
    <property type="match status" value="1"/>
</dbReference>
<dbReference type="HAMAP" id="MF_04080">
    <property type="entry name" value="HIV_VPR"/>
    <property type="match status" value="1"/>
</dbReference>
<dbReference type="InterPro" id="IPR000012">
    <property type="entry name" value="RetroV_VpR/X"/>
</dbReference>
<dbReference type="Pfam" id="PF00522">
    <property type="entry name" value="VPR"/>
    <property type="match status" value="1"/>
</dbReference>
<dbReference type="PRINTS" id="PR00444">
    <property type="entry name" value="HIVVPRVPX"/>
</dbReference>